<comment type="function">
    <text evidence="1">Involved in pre-mRNA splicing.</text>
</comment>
<comment type="subunit">
    <text evidence="1">Associated with the spliceosome.</text>
</comment>
<comment type="subcellular location">
    <subcellularLocation>
        <location evidence="1">Nucleus</location>
    </subcellularLocation>
</comment>
<comment type="similarity">
    <text evidence="4">Belongs to the CWC25 family.</text>
</comment>
<proteinExistence type="inferred from homology"/>
<evidence type="ECO:0000250" key="1"/>
<evidence type="ECO:0000255" key="2"/>
<evidence type="ECO:0000256" key="3">
    <source>
        <dbReference type="SAM" id="MobiDB-lite"/>
    </source>
</evidence>
<evidence type="ECO:0000305" key="4"/>
<keyword id="KW-0175">Coiled coil</keyword>
<keyword id="KW-0507">mRNA processing</keyword>
<keyword id="KW-0508">mRNA splicing</keyword>
<keyword id="KW-0539">Nucleus</keyword>
<keyword id="KW-1185">Reference proteome</keyword>
<keyword id="KW-0747">Spliceosome</keyword>
<gene>
    <name type="primary">CWC25</name>
    <name type="ORF">UMAG_10430</name>
</gene>
<dbReference type="EMBL" id="CM003151">
    <property type="protein sequence ID" value="KIS67785.1"/>
    <property type="molecule type" value="Genomic_DNA"/>
</dbReference>
<dbReference type="RefSeq" id="XP_011390781.1">
    <property type="nucleotide sequence ID" value="XM_011392479.1"/>
</dbReference>
<dbReference type="SMR" id="Q4P6I3"/>
<dbReference type="FunCoup" id="Q4P6I3">
    <property type="interactions" value="234"/>
</dbReference>
<dbReference type="STRING" id="237631.Q4P6I3"/>
<dbReference type="EnsemblFungi" id="KIS67785">
    <property type="protein sequence ID" value="KIS67785"/>
    <property type="gene ID" value="UMAG_10430"/>
</dbReference>
<dbReference type="GeneID" id="23566466"/>
<dbReference type="KEGG" id="uma:UMAG_10430"/>
<dbReference type="VEuPathDB" id="FungiDB:UMAG_10430"/>
<dbReference type="eggNOG" id="KOG3869">
    <property type="taxonomic scope" value="Eukaryota"/>
</dbReference>
<dbReference type="InParanoid" id="Q4P6I3"/>
<dbReference type="OrthoDB" id="21123at2759"/>
<dbReference type="Proteomes" id="UP000000561">
    <property type="component" value="Chromosome 12"/>
</dbReference>
<dbReference type="GO" id="GO:0000974">
    <property type="term" value="C:Prp19 complex"/>
    <property type="evidence" value="ECO:0007669"/>
    <property type="project" value="EnsemblFungi"/>
</dbReference>
<dbReference type="GO" id="GO:0005684">
    <property type="term" value="C:U2-type spliceosomal complex"/>
    <property type="evidence" value="ECO:0000318"/>
    <property type="project" value="GO_Central"/>
</dbReference>
<dbReference type="GO" id="GO:0000398">
    <property type="term" value="P:mRNA splicing, via spliceosome"/>
    <property type="evidence" value="ECO:0000318"/>
    <property type="project" value="GO_Central"/>
</dbReference>
<dbReference type="InterPro" id="IPR019339">
    <property type="entry name" value="CIR_N_dom"/>
</dbReference>
<dbReference type="InterPro" id="IPR022209">
    <property type="entry name" value="CWC25"/>
</dbReference>
<dbReference type="InterPro" id="IPR051376">
    <property type="entry name" value="CWC25_splicing_factor"/>
</dbReference>
<dbReference type="PANTHER" id="PTHR16196">
    <property type="entry name" value="CELL CYCLE CONTROL PROTEIN CWF25"/>
    <property type="match status" value="1"/>
</dbReference>
<dbReference type="PANTHER" id="PTHR16196:SF0">
    <property type="entry name" value="PRE-MRNA-SPLICING FACTOR CWC25 HOMOLOG"/>
    <property type="match status" value="1"/>
</dbReference>
<dbReference type="Pfam" id="PF10197">
    <property type="entry name" value="Cir_N"/>
    <property type="match status" value="1"/>
</dbReference>
<dbReference type="Pfam" id="PF12542">
    <property type="entry name" value="CWC25"/>
    <property type="match status" value="1"/>
</dbReference>
<dbReference type="SMART" id="SM01083">
    <property type="entry name" value="Cir_N"/>
    <property type="match status" value="1"/>
</dbReference>
<reference key="1">
    <citation type="journal article" date="2006" name="Nature">
        <title>Insights from the genome of the biotrophic fungal plant pathogen Ustilago maydis.</title>
        <authorList>
            <person name="Kaemper J."/>
            <person name="Kahmann R."/>
            <person name="Boelker M."/>
            <person name="Ma L.-J."/>
            <person name="Brefort T."/>
            <person name="Saville B.J."/>
            <person name="Banuett F."/>
            <person name="Kronstad J.W."/>
            <person name="Gold S.E."/>
            <person name="Mueller O."/>
            <person name="Perlin M.H."/>
            <person name="Woesten H.A.B."/>
            <person name="de Vries R."/>
            <person name="Ruiz-Herrera J."/>
            <person name="Reynaga-Pena C.G."/>
            <person name="Snetselaar K."/>
            <person name="McCann M."/>
            <person name="Perez-Martin J."/>
            <person name="Feldbruegge M."/>
            <person name="Basse C.W."/>
            <person name="Steinberg G."/>
            <person name="Ibeas J.I."/>
            <person name="Holloman W."/>
            <person name="Guzman P."/>
            <person name="Farman M.L."/>
            <person name="Stajich J.E."/>
            <person name="Sentandreu R."/>
            <person name="Gonzalez-Prieto J.M."/>
            <person name="Kennell J.C."/>
            <person name="Molina L."/>
            <person name="Schirawski J."/>
            <person name="Mendoza-Mendoza A."/>
            <person name="Greilinger D."/>
            <person name="Muench K."/>
            <person name="Roessel N."/>
            <person name="Scherer M."/>
            <person name="Vranes M."/>
            <person name="Ladendorf O."/>
            <person name="Vincon V."/>
            <person name="Fuchs U."/>
            <person name="Sandrock B."/>
            <person name="Meng S."/>
            <person name="Ho E.C.H."/>
            <person name="Cahill M.J."/>
            <person name="Boyce K.J."/>
            <person name="Klose J."/>
            <person name="Klosterman S.J."/>
            <person name="Deelstra H.J."/>
            <person name="Ortiz-Castellanos L."/>
            <person name="Li W."/>
            <person name="Sanchez-Alonso P."/>
            <person name="Schreier P.H."/>
            <person name="Haeuser-Hahn I."/>
            <person name="Vaupel M."/>
            <person name="Koopmann E."/>
            <person name="Friedrich G."/>
            <person name="Voss H."/>
            <person name="Schlueter T."/>
            <person name="Margolis J."/>
            <person name="Platt D."/>
            <person name="Swimmer C."/>
            <person name="Gnirke A."/>
            <person name="Chen F."/>
            <person name="Vysotskaia V."/>
            <person name="Mannhaupt G."/>
            <person name="Gueldener U."/>
            <person name="Muensterkoetter M."/>
            <person name="Haase D."/>
            <person name="Oesterheld M."/>
            <person name="Mewes H.-W."/>
            <person name="Mauceli E.W."/>
            <person name="DeCaprio D."/>
            <person name="Wade C.M."/>
            <person name="Butler J."/>
            <person name="Young S.K."/>
            <person name="Jaffe D.B."/>
            <person name="Calvo S.E."/>
            <person name="Nusbaum C."/>
            <person name="Galagan J.E."/>
            <person name="Birren B.W."/>
        </authorList>
    </citation>
    <scope>NUCLEOTIDE SEQUENCE [LARGE SCALE GENOMIC DNA]</scope>
    <source>
        <strain>DSM 14603 / FGSC 9021 / UM521</strain>
    </source>
</reference>
<reference key="2">
    <citation type="submission" date="2014-09" db="EMBL/GenBank/DDBJ databases">
        <authorList>
            <person name="Gueldener U."/>
            <person name="Muensterkoetter M."/>
            <person name="Walter M.C."/>
            <person name="Mannhaupt G."/>
            <person name="Kahmann R."/>
        </authorList>
    </citation>
    <scope>GENOME REANNOTATION</scope>
    <source>
        <strain>DSM 14603 / FGSC 9021 / UM521</strain>
    </source>
</reference>
<organism>
    <name type="scientific">Mycosarcoma maydis</name>
    <name type="common">Corn smut fungus</name>
    <name type="synonym">Ustilago maydis</name>
    <dbReference type="NCBI Taxonomy" id="5270"/>
    <lineage>
        <taxon>Eukaryota</taxon>
        <taxon>Fungi</taxon>
        <taxon>Dikarya</taxon>
        <taxon>Basidiomycota</taxon>
        <taxon>Ustilaginomycotina</taxon>
        <taxon>Ustilaginomycetes</taxon>
        <taxon>Ustilaginales</taxon>
        <taxon>Ustilaginaceae</taxon>
        <taxon>Mycosarcoma</taxon>
    </lineage>
</organism>
<accession>Q4P6I3</accession>
<accession>A0A0D1DYZ4</accession>
<feature type="chain" id="PRO_0000079594" description="Pre-mRNA-splicing factor CWC25">
    <location>
        <begin position="1"/>
        <end position="428"/>
    </location>
</feature>
<feature type="region of interest" description="Disordered" evidence="3">
    <location>
        <begin position="40"/>
        <end position="61"/>
    </location>
</feature>
<feature type="region of interest" description="Disordered" evidence="3">
    <location>
        <begin position="163"/>
        <end position="380"/>
    </location>
</feature>
<feature type="coiled-coil region" evidence="2">
    <location>
        <begin position="19"/>
        <end position="65"/>
    </location>
</feature>
<feature type="coiled-coil region" evidence="2">
    <location>
        <begin position="326"/>
        <end position="389"/>
    </location>
</feature>
<feature type="compositionally biased region" description="Basic and acidic residues" evidence="3">
    <location>
        <begin position="172"/>
        <end position="285"/>
    </location>
</feature>
<feature type="compositionally biased region" description="Basic and acidic residues" evidence="3">
    <location>
        <begin position="301"/>
        <end position="311"/>
    </location>
</feature>
<feature type="compositionally biased region" description="Polar residues" evidence="3">
    <location>
        <begin position="312"/>
        <end position="325"/>
    </location>
</feature>
<feature type="compositionally biased region" description="Basic and acidic residues" evidence="3">
    <location>
        <begin position="327"/>
        <end position="337"/>
    </location>
</feature>
<feature type="compositionally biased region" description="Polar residues" evidence="3">
    <location>
        <begin position="347"/>
        <end position="363"/>
    </location>
</feature>
<name>CWC25_MYCMD</name>
<protein>
    <recommendedName>
        <fullName>Pre-mRNA-splicing factor CWC25</fullName>
    </recommendedName>
</protein>
<sequence>MGGGDLNTKKSWHPLLQVNQERVWKREKEALEERKKLEELRREREQEREMQQLQRLQEEAGGKKRIDRVDWMYATPATTGSGSAAEMEDYLLGKKRVDKLLQGEENKEMSKTTQKSLVSLQNANSARDLAAKIREDPMLAIKQQEQAAYEALLRDPTRLRQLKMQAGIDTDTQSKDERRRSKEEKRRRHDRDEHRRRGSRHGESRSESRSHSRRDDRDRKSSWNEGSSSRRHDGDEERRSLKRHRDDQDRDRHRYERRLHDADDSRPASRSNRDRRDKDAVDESSSRQSTSYSRSRSRSPPARDYRNDKRLSSSSAFTRPSNGGSARNREEDEERKQQARQLKLQEMEQNARSMEQQRSSYVSKINAEEAEQERREAELRQKLIDARSKGHGDGKGNFIMDQQRKTFHDSVDLAERMRRDRARLQRVD</sequence>